<accession>P10090</accession>
<accession>Q9V3A2</accession>
<accession>Q9XY33</accession>
<name>WHITE_DROME</name>
<organism>
    <name type="scientific">Drosophila melanogaster</name>
    <name type="common">Fruit fly</name>
    <dbReference type="NCBI Taxonomy" id="7227"/>
    <lineage>
        <taxon>Eukaryota</taxon>
        <taxon>Metazoa</taxon>
        <taxon>Ecdysozoa</taxon>
        <taxon>Arthropoda</taxon>
        <taxon>Hexapoda</taxon>
        <taxon>Insecta</taxon>
        <taxon>Pterygota</taxon>
        <taxon>Neoptera</taxon>
        <taxon>Endopterygota</taxon>
        <taxon>Diptera</taxon>
        <taxon>Brachycera</taxon>
        <taxon>Muscomorpha</taxon>
        <taxon>Ephydroidea</taxon>
        <taxon>Drosophilidae</taxon>
        <taxon>Drosophila</taxon>
        <taxon>Sophophora</taxon>
    </lineage>
</organism>
<sequence>MGQEDQELLIRGGSKHPSAEHLNNGDSGAASQSCINQGFGQAKNYGTLLPPSPPEDSGSGSGQLAENLTYAWHNMDIFGAVNQPGSGWRQLVNRTRGLFCNERHIPAPRKHLLKNVCGVAYPGELLAVMGSSGAGKTTLLNALAFRSPQGIQVSPSGMRLLNGQPVDAKEMQARCAYVQQDDLFIGSLTAREHLIFQAMVRMPRHLTYRQRVARVDQVIQELSLSKCQHTIIGVPGRVKGLSGGERKRLAFASEALTDPPLLICDEPTSGLDSFTAHSVVQVLKKLSQKGKTVILTIHQPSSELFELFDKILLMAEGRVAFLGTPSEAVDFFSYVGAQCPTNYNPADFYVQVLAVVPGREIESRDRIAKICDNFAISKVARDMEQLLATKNLEKPLEQPENGYTYKATWFMQFRAVLWRSWLSVLKEPLLVKVRLIQTTMVAILIGLIFLGQQLTQVGVMNINGAIFLFLTNMTFQNVFATINVFTSELPVFMREARSRLYRCDTYFLGKTIAELPLFLTVPLVFTAIAYPMIGLRAGVLHFFNCLALVTLVANVSTSFGYLISCASSSTSMALSVGPPVIIPFLLFGGFFLNSGSVPVYLKWLSYLSWFRYANEGLLINQWADVEPGEISCTSSNTTCPSSGKVILETLNFSAADLPLDYVGLAILIVSFRVLAYLALRLRARRKE</sequence>
<comment type="function">
    <text evidence="5 7 8 9 12 13 14 15 16">ATP-dependent transporter of the ATP-binding cassette (ABC) family which transports various molecules including bioamines, neurotransmitters, metabolic intermediates and second messengers (PubMed:10407069, PubMed:117796, PubMed:18310115, PubMed:18931318, PubMed:33820991, PubMed:6788034, PubMed:812484). In the eye, required for the transport of the eye red and brown pigment precursors, guanine and tryptophan, into pigment cell granules (PubMed:10407069, PubMed:8144619). Probably in association with bw/brown, involved in the transport of guanine (PubMed:117796). Probably in association with st/scarlet involved in the transport of kynurenine and probably tryptophan (PubMed:812484). Involved in the transport of kynurenine in pupal eyes (PubMed:812484). May play a role in histamine uptake by the lamina epithelial glia which surrounds photoreceptors R1-R6 (PubMed:18931318). In Malpighian tubules, involved in the transport of cGMP, guanine, xanthine, riboflavin, kynurenine and tryptophan (PubMed:117796, PubMed:18310115, PubMed:6788034, PubMed:812484). Probably in association with br/brown, involved in aging-induced intestinal stem cell proliferation in the midgut by regulating tetrahydrofolate transport (PubMed:33820991). Probably in association with st/scarlet, plays a role in zinc storage granule biogenesis in Malpighian tubule principal epithelial cells (PubMed:29367274).</text>
</comment>
<comment type="catalytic activity">
    <reaction evidence="21">
        <text>3',5'-cyclic GMP(in) + ATP + H2O = 3',5'-cyclic GMP(out) + ADP + phosphate + H(+)</text>
        <dbReference type="Rhea" id="RHEA:66188"/>
        <dbReference type="ChEBI" id="CHEBI:15377"/>
        <dbReference type="ChEBI" id="CHEBI:15378"/>
        <dbReference type="ChEBI" id="CHEBI:30616"/>
        <dbReference type="ChEBI" id="CHEBI:43474"/>
        <dbReference type="ChEBI" id="CHEBI:57746"/>
        <dbReference type="ChEBI" id="CHEBI:456216"/>
    </reaction>
</comment>
<comment type="catalytic activity">
    <reaction evidence="20">
        <text>guanine(out) + ATP + H2O = guanine(in) + ADP + phosphate + H(+)</text>
        <dbReference type="Rhea" id="RHEA:20832"/>
        <dbReference type="ChEBI" id="CHEBI:15377"/>
        <dbReference type="ChEBI" id="CHEBI:15378"/>
        <dbReference type="ChEBI" id="CHEBI:16235"/>
        <dbReference type="ChEBI" id="CHEBI:30616"/>
        <dbReference type="ChEBI" id="CHEBI:43474"/>
        <dbReference type="ChEBI" id="CHEBI:456216"/>
        <dbReference type="EC" id="7.6.2.6"/>
    </reaction>
</comment>
<comment type="catalytic activity">
    <reaction evidence="20 23">
        <text>riboflavin(in) + ATP + H2O = riboflavin(out) + ADP + phosphate + H(+)</text>
        <dbReference type="Rhea" id="RHEA:61352"/>
        <dbReference type="ChEBI" id="CHEBI:15377"/>
        <dbReference type="ChEBI" id="CHEBI:15378"/>
        <dbReference type="ChEBI" id="CHEBI:30616"/>
        <dbReference type="ChEBI" id="CHEBI:43474"/>
        <dbReference type="ChEBI" id="CHEBI:57986"/>
        <dbReference type="ChEBI" id="CHEBI:456216"/>
    </reaction>
</comment>
<comment type="catalytic activity">
    <reaction evidence="23">
        <text>(6S)-5,6,7,8-tetrahydrofolate(out) + ATP + H2O = (6S)-5,6,7,8-tetrahydrofolate(in) + ADP + phosphate + H(+)</text>
        <dbReference type="Rhea" id="RHEA:68592"/>
        <dbReference type="ChEBI" id="CHEBI:15377"/>
        <dbReference type="ChEBI" id="CHEBI:15378"/>
        <dbReference type="ChEBI" id="CHEBI:30616"/>
        <dbReference type="ChEBI" id="CHEBI:43474"/>
        <dbReference type="ChEBI" id="CHEBI:57453"/>
        <dbReference type="ChEBI" id="CHEBI:456216"/>
    </reaction>
</comment>
<comment type="catalytic activity">
    <reaction evidence="14 15 23">
        <text>L-tryptophan(out) + ATP + H2O = L-tryptophan(in) + ADP + phosphate + H(+)</text>
        <dbReference type="Rhea" id="RHEA:68584"/>
        <dbReference type="ChEBI" id="CHEBI:15377"/>
        <dbReference type="ChEBI" id="CHEBI:15378"/>
        <dbReference type="ChEBI" id="CHEBI:30616"/>
        <dbReference type="ChEBI" id="CHEBI:43474"/>
        <dbReference type="ChEBI" id="CHEBI:57912"/>
        <dbReference type="ChEBI" id="CHEBI:456216"/>
    </reaction>
</comment>
<comment type="catalytic activity">
    <reaction evidence="23 25">
        <text>L-kynurenine(out) + ATP + H2O = L-kynurenine(in) + ADP + phosphate + H(+)</text>
        <dbReference type="Rhea" id="RHEA:68580"/>
        <dbReference type="ChEBI" id="CHEBI:15377"/>
        <dbReference type="ChEBI" id="CHEBI:15378"/>
        <dbReference type="ChEBI" id="CHEBI:30616"/>
        <dbReference type="ChEBI" id="CHEBI:43474"/>
        <dbReference type="ChEBI" id="CHEBI:57959"/>
        <dbReference type="ChEBI" id="CHEBI:456216"/>
    </reaction>
</comment>
<comment type="catalytic activity">
    <reaction evidence="20 23">
        <text>xanthine(out) + ATP + H2O = xanthine(in) + ADP + phosphate + H(+)</text>
        <dbReference type="Rhea" id="RHEA:68576"/>
        <dbReference type="ChEBI" id="CHEBI:15377"/>
        <dbReference type="ChEBI" id="CHEBI:15378"/>
        <dbReference type="ChEBI" id="CHEBI:17712"/>
        <dbReference type="ChEBI" id="CHEBI:30616"/>
        <dbReference type="ChEBI" id="CHEBI:43474"/>
        <dbReference type="ChEBI" id="CHEBI:456216"/>
    </reaction>
</comment>
<comment type="subunit">
    <text evidence="19 22 26">May form a heterodimer with bw/brown (Probable). May form a heterodimer with st/scarlet (Probable).</text>
</comment>
<comment type="subcellular location">
    <subcellularLocation>
        <location evidence="6 13">Cytoplasmic vesicle membrane</location>
        <topology evidence="1">Multi-pass membrane protein</topology>
    </subcellularLocation>
    <text evidence="6">Co-localizes with st/scarlet to pigment granules within pigment cells and retinula cells of the compound eye.</text>
</comment>
<comment type="tissue specificity">
    <text evidence="6 9 13">Expressed in the head (at protein level) (PubMed:11294610). Expressed in the eye, specifically in retina primary pigment cells, in the basement membrane of the base of secondary and tertiary pigment cells, and in retinula cells (at protein level) (PubMed:11294610, PubMed:18931318). Expressed in the retina underlying lamina in the epithelial glia that surrounds the array of lamina cartridges (at protein level) (PubMed:18931318). Weakly expressed in photoreceptors, specifically in terminals of R1-R6, R7 and R8 (at protein level) (PubMed:18931318). Expressed at very low levels in medulla and central brain (at protein level) (PubMed:18931318). Expressed in principal cells of the Malpighian tubules (PubMed:33820991).</text>
</comment>
<comment type="induction">
    <text evidence="13">Up-regulated during aging in intestinal stem cells.</text>
</comment>
<comment type="disruption phenotype">
    <text evidence="6 7 8 9 10 11 12 13 14 15">Eyes are white due to a defect in color pigment production (PubMed:18310115, PubMed:33820991). Malpighian tubules appear clear or white (PubMed:18310115, PubMed:29367274). Loss of st/scarlet protein in the pigment cells and retinula cells of the compound eye (PubMed:11294610). Transport of cGMP, but not cAMP, is inhibited in Malpighian tubules; however, basal fluid transport rates or rates stimulated by cGMP in the tubules are normal (PubMed:18310115). In Malpighian tubules, uptake of guanine, xanthine and riboflavin is impaired while uptake of hypoxanthine, guanosine and adenine is not affected (PubMed:117796). In Malpighian tubules, kynurenine and tryptophan uptake is impaired; however, incorporation of tryptophan into proteins is not affected (PubMed:6788034, PubMed:812484). In pupal eyes, kynurenine uptake is impaired (PubMed:812484). In the head, 50% reduction in histamine levels, 60% reduction in dopamine levels and 32% reduction in serotonin (5-HT) levels (PubMed:18931318). Specifically, histamine levels are reduced in the retina, the retina lamina and the central brain (PubMed:18931318). In addition, in lamina photoreceptor terminals R1-R6, numbers of synaptic vesicles and capitate projections, which are sites of endocytosis of vesicle membrane, are reduced (PubMed:18931318). In young and old flies, reduces the levels of several metabolites, including tryptophan, kynurenine, kynurenic acid, 3-hydroxykynurenine, guanosine, xanthine, riboflavin and tetrahydrofolate, and increases the levels of guanine (PubMed:33820991). Inhibits aging-induced intestinal stem cell proliferation (PubMed:33820991). 3-fold reduction in Malpighian tubule zinc stores (PubMed:29367274). Severe reduction of copulation success and reduced courting activities in males (PubMed:28794482). RNAi-mediated knockdown in central nervous system causes a delay in locomotor recovery from anoxia with no effect on eye pigmentation (PubMed:27029736). RNAi-mediated knockdown in serotonergic neurons, causes a delay in locomotor recovery from anoxia (PubMed:27029736).</text>
</comment>
<comment type="similarity">
    <text evidence="18">Belongs to the ABC transporter superfamily. ABCG family. Eye pigment precursor importer (TC 3.A.1.204) subfamily.</text>
</comment>
<protein>
    <recommendedName>
        <fullName>Protein white</fullName>
        <ecNumber evidence="20 21 23 24 25">7.6.2.-</ecNumber>
        <ecNumber evidence="20">7.6.2.6</ecNumber>
    </recommendedName>
    <alternativeName>
        <fullName evidence="17">ATP-binding cassette transporter sub-family G member white</fullName>
    </alternativeName>
    <alternativeName>
        <fullName evidence="18">Broad substrate specificity ATP-binding cassette transporter white</fullName>
    </alternativeName>
</protein>
<gene>
    <name evidence="27" type="primary">w</name>
    <name evidence="27" type="ORF">CG2759</name>
</gene>
<evidence type="ECO:0000255" key="1"/>
<evidence type="ECO:0000255" key="2">
    <source>
        <dbReference type="PROSITE-ProRule" id="PRU00434"/>
    </source>
</evidence>
<evidence type="ECO:0000255" key="3">
    <source>
        <dbReference type="PROSITE-ProRule" id="PRU00498"/>
    </source>
</evidence>
<evidence type="ECO:0000256" key="4">
    <source>
        <dbReference type="SAM" id="MobiDB-lite"/>
    </source>
</evidence>
<evidence type="ECO:0000269" key="5">
    <source>
    </source>
</evidence>
<evidence type="ECO:0000269" key="6">
    <source>
    </source>
</evidence>
<evidence type="ECO:0000269" key="7">
    <source>
    </source>
</evidence>
<evidence type="ECO:0000269" key="8">
    <source>
    </source>
</evidence>
<evidence type="ECO:0000269" key="9">
    <source>
    </source>
</evidence>
<evidence type="ECO:0000269" key="10">
    <source>
    </source>
</evidence>
<evidence type="ECO:0000269" key="11">
    <source>
    </source>
</evidence>
<evidence type="ECO:0000269" key="12">
    <source>
    </source>
</evidence>
<evidence type="ECO:0000269" key="13">
    <source>
    </source>
</evidence>
<evidence type="ECO:0000269" key="14">
    <source>
    </source>
</evidence>
<evidence type="ECO:0000269" key="15">
    <source>
    </source>
</evidence>
<evidence type="ECO:0000269" key="16">
    <source>
    </source>
</evidence>
<evidence type="ECO:0000303" key="17">
    <source>
    </source>
</evidence>
<evidence type="ECO:0000305" key="18"/>
<evidence type="ECO:0000305" key="19">
    <source>
    </source>
</evidence>
<evidence type="ECO:0000305" key="20">
    <source>
    </source>
</evidence>
<evidence type="ECO:0000305" key="21">
    <source>
    </source>
</evidence>
<evidence type="ECO:0000305" key="22">
    <source>
    </source>
</evidence>
<evidence type="ECO:0000305" key="23">
    <source>
    </source>
</evidence>
<evidence type="ECO:0000305" key="24">
    <source>
    </source>
</evidence>
<evidence type="ECO:0000305" key="25">
    <source>
    </source>
</evidence>
<evidence type="ECO:0000305" key="26">
    <source>
    </source>
</evidence>
<evidence type="ECO:0000312" key="27">
    <source>
        <dbReference type="FlyBase" id="FBgn0003996"/>
    </source>
</evidence>
<dbReference type="EC" id="7.6.2.-" evidence="20 21 23 24 25"/>
<dbReference type="EC" id="7.6.2.6" evidence="20"/>
<dbReference type="EMBL" id="X51749">
    <property type="protein sequence ID" value="CAA36038.1"/>
    <property type="molecule type" value="mRNA"/>
</dbReference>
<dbReference type="EMBL" id="X02974">
    <property type="protein sequence ID" value="CAA26716.2"/>
    <property type="molecule type" value="Genomic_DNA"/>
</dbReference>
<dbReference type="EMBL" id="AB028139">
    <property type="protein sequence ID" value="BAA78210.1"/>
    <property type="molecule type" value="Genomic_DNA"/>
</dbReference>
<dbReference type="EMBL" id="AE014298">
    <property type="protein sequence ID" value="AAF45826.1"/>
    <property type="molecule type" value="Genomic_DNA"/>
</dbReference>
<dbReference type="EMBL" id="AL133506">
    <property type="protein sequence ID" value="CAB65847.1"/>
    <property type="molecule type" value="Genomic_DNA"/>
</dbReference>
<dbReference type="EMBL" id="X76202">
    <property type="protein sequence ID" value="CAA53795.1"/>
    <property type="molecule type" value="Genomic_DNA"/>
</dbReference>
<dbReference type="PIR" id="S08635">
    <property type="entry name" value="FYFFW"/>
</dbReference>
<dbReference type="RefSeq" id="NP_476787.1">
    <property type="nucleotide sequence ID" value="NM_057439.2"/>
</dbReference>
<dbReference type="SMR" id="P10090"/>
<dbReference type="BioGRID" id="57802">
    <property type="interactions" value="80"/>
</dbReference>
<dbReference type="DIP" id="DIP-388N"/>
<dbReference type="FunCoup" id="P10090">
    <property type="interactions" value="2"/>
</dbReference>
<dbReference type="IntAct" id="P10090">
    <property type="interactions" value="1"/>
</dbReference>
<dbReference type="STRING" id="7227.FBpp0070468"/>
<dbReference type="TCDB" id="3.A.1.204.1">
    <property type="family name" value="the atp-binding cassette (abc) superfamily"/>
</dbReference>
<dbReference type="GlyCosmos" id="P10090">
    <property type="glycosylation" value="1 site, No reported glycans"/>
</dbReference>
<dbReference type="GlyGen" id="P10090">
    <property type="glycosylation" value="1 site"/>
</dbReference>
<dbReference type="PaxDb" id="7227-FBpp0070468"/>
<dbReference type="EnsemblMetazoa" id="FBtr0070490">
    <property type="protein sequence ID" value="FBpp0070468"/>
    <property type="gene ID" value="FBgn0003996"/>
</dbReference>
<dbReference type="GeneID" id="31271"/>
<dbReference type="KEGG" id="dme:Dmel_CG2759"/>
<dbReference type="AGR" id="FB:FBgn0003996"/>
<dbReference type="CTD" id="31271"/>
<dbReference type="FlyBase" id="FBgn0003996">
    <property type="gene designation" value="w"/>
</dbReference>
<dbReference type="VEuPathDB" id="VectorBase:FBgn0003996"/>
<dbReference type="eggNOG" id="KOG0061">
    <property type="taxonomic scope" value="Eukaryota"/>
</dbReference>
<dbReference type="GeneTree" id="ENSGT00940000167029"/>
<dbReference type="HOGENOM" id="CLU_000604_57_6_1"/>
<dbReference type="InParanoid" id="P10090"/>
<dbReference type="OrthoDB" id="66620at2759"/>
<dbReference type="PhylomeDB" id="P10090"/>
<dbReference type="SignaLink" id="P10090"/>
<dbReference type="BioGRID-ORCS" id="31271">
    <property type="hits" value="0 hits in 1 CRISPR screen"/>
</dbReference>
<dbReference type="ChiTaRS" id="w">
    <property type="organism name" value="fly"/>
</dbReference>
<dbReference type="GenomeRNAi" id="31271"/>
<dbReference type="PRO" id="PR:P10090"/>
<dbReference type="Proteomes" id="UP000000803">
    <property type="component" value="Chromosome X"/>
</dbReference>
<dbReference type="Bgee" id="FBgn0003996">
    <property type="expression patterns" value="Expressed in fat body cell in Malpighian tubule and 21 other cell types or tissues"/>
</dbReference>
<dbReference type="ExpressionAtlas" id="P10090">
    <property type="expression patterns" value="baseline and differential"/>
</dbReference>
<dbReference type="GO" id="GO:0031410">
    <property type="term" value="C:cytoplasmic vesicle"/>
    <property type="evidence" value="ECO:0000314"/>
    <property type="project" value="FlyBase"/>
</dbReference>
<dbReference type="GO" id="GO:0030659">
    <property type="term" value="C:cytoplasmic vesicle membrane"/>
    <property type="evidence" value="ECO:0000314"/>
    <property type="project" value="UniProtKB"/>
</dbReference>
<dbReference type="GO" id="GO:0048770">
    <property type="term" value="C:pigment granule"/>
    <property type="evidence" value="ECO:0000314"/>
    <property type="project" value="FlyBase"/>
</dbReference>
<dbReference type="GO" id="GO:0090741">
    <property type="term" value="C:pigment granule membrane"/>
    <property type="evidence" value="ECO:0000314"/>
    <property type="project" value="FlyBase"/>
</dbReference>
<dbReference type="GO" id="GO:0005886">
    <property type="term" value="C:plasma membrane"/>
    <property type="evidence" value="ECO:0000318"/>
    <property type="project" value="GO_Central"/>
</dbReference>
<dbReference type="GO" id="GO:0098793">
    <property type="term" value="C:presynapse"/>
    <property type="evidence" value="ECO:0007669"/>
    <property type="project" value="GOC"/>
</dbReference>
<dbReference type="GO" id="GO:1905948">
    <property type="term" value="F:ABC-type 3',5'-cyclic GMP transmembrane transporter activity"/>
    <property type="evidence" value="ECO:0000315"/>
    <property type="project" value="FlyBase"/>
</dbReference>
<dbReference type="GO" id="GO:0008558">
    <property type="term" value="F:ABC-type guanine transporter activity"/>
    <property type="evidence" value="ECO:0000315"/>
    <property type="project" value="FlyBase"/>
</dbReference>
<dbReference type="GO" id="GO:0005275">
    <property type="term" value="F:amine transmembrane transporter activity"/>
    <property type="evidence" value="ECO:0000315"/>
    <property type="project" value="FlyBase"/>
</dbReference>
<dbReference type="GO" id="GO:0005524">
    <property type="term" value="F:ATP binding"/>
    <property type="evidence" value="ECO:0007669"/>
    <property type="project" value="UniProtKB-KW"/>
</dbReference>
<dbReference type="GO" id="GO:0016887">
    <property type="term" value="F:ATP hydrolysis activity"/>
    <property type="evidence" value="ECO:0007669"/>
    <property type="project" value="InterPro"/>
</dbReference>
<dbReference type="GO" id="GO:0042626">
    <property type="term" value="F:ATPase-coupled transmembrane transporter activity"/>
    <property type="evidence" value="ECO:0000318"/>
    <property type="project" value="GO_Central"/>
</dbReference>
<dbReference type="GO" id="GO:0015208">
    <property type="term" value="F:guanine transmembrane transporter activity"/>
    <property type="evidence" value="ECO:0000315"/>
    <property type="project" value="UniProtKB"/>
</dbReference>
<dbReference type="GO" id="GO:0015196">
    <property type="term" value="F:L-tryptophan transmembrane transporter activity"/>
    <property type="evidence" value="ECO:0000315"/>
    <property type="project" value="UniProtKB"/>
</dbReference>
<dbReference type="GO" id="GO:0031409">
    <property type="term" value="F:pigment binding"/>
    <property type="evidence" value="ECO:0007669"/>
    <property type="project" value="UniProtKB-KW"/>
</dbReference>
<dbReference type="GO" id="GO:0032217">
    <property type="term" value="F:riboflavin transmembrane transporter activity"/>
    <property type="evidence" value="ECO:0000315"/>
    <property type="project" value="UniProtKB"/>
</dbReference>
<dbReference type="GO" id="GO:0022857">
    <property type="term" value="F:transmembrane transporter activity"/>
    <property type="evidence" value="ECO:0000315"/>
    <property type="project" value="UniProtKB"/>
</dbReference>
<dbReference type="GO" id="GO:0042907">
    <property type="term" value="F:xanthine transmembrane transporter activity"/>
    <property type="evidence" value="ECO:0000315"/>
    <property type="project" value="UniProtKB"/>
</dbReference>
<dbReference type="GO" id="GO:0015842">
    <property type="term" value="P:aminergic neurotransmitter loading into synaptic vesicle"/>
    <property type="evidence" value="ECO:0000315"/>
    <property type="project" value="FlyBase"/>
</dbReference>
<dbReference type="GO" id="GO:0042401">
    <property type="term" value="P:biogenic amine biosynthetic process"/>
    <property type="evidence" value="ECO:0000315"/>
    <property type="project" value="FlyBase"/>
</dbReference>
<dbReference type="GO" id="GO:0070731">
    <property type="term" value="P:cGMP transport"/>
    <property type="evidence" value="ECO:0000315"/>
    <property type="project" value="FlyBase"/>
</dbReference>
<dbReference type="GO" id="GO:0048072">
    <property type="term" value="P:compound eye pigmentation"/>
    <property type="evidence" value="ECO:0000315"/>
    <property type="project" value="FlyBase"/>
</dbReference>
<dbReference type="GO" id="GO:0042441">
    <property type="term" value="P:eye pigment metabolic process"/>
    <property type="evidence" value="ECO:0000304"/>
    <property type="project" value="FlyBase"/>
</dbReference>
<dbReference type="GO" id="GO:0006856">
    <property type="term" value="P:eye pigment precursor transport"/>
    <property type="evidence" value="ECO:0000270"/>
    <property type="project" value="FlyBase"/>
</dbReference>
<dbReference type="GO" id="GO:0042332">
    <property type="term" value="P:gravitaxis"/>
    <property type="evidence" value="ECO:0000315"/>
    <property type="project" value="FlyBase"/>
</dbReference>
<dbReference type="GO" id="GO:0015854">
    <property type="term" value="P:guanine transport"/>
    <property type="evidence" value="ECO:0000315"/>
    <property type="project" value="UniProtKB"/>
</dbReference>
<dbReference type="GO" id="GO:0051615">
    <property type="term" value="P:histamine uptake"/>
    <property type="evidence" value="ECO:0000316"/>
    <property type="project" value="FlyBase"/>
</dbReference>
<dbReference type="GO" id="GO:0008049">
    <property type="term" value="P:male courtship behavior"/>
    <property type="evidence" value="ECO:0000315"/>
    <property type="project" value="FlyBase"/>
</dbReference>
<dbReference type="GO" id="GO:0007613">
    <property type="term" value="P:memory"/>
    <property type="evidence" value="ECO:0000315"/>
    <property type="project" value="FlyBase"/>
</dbReference>
<dbReference type="GO" id="GO:0032218">
    <property type="term" value="P:riboflavin transport"/>
    <property type="evidence" value="ECO:0000315"/>
    <property type="project" value="UniProtKB"/>
</dbReference>
<dbReference type="GO" id="GO:0055085">
    <property type="term" value="P:transmembrane transport"/>
    <property type="evidence" value="ECO:0000315"/>
    <property type="project" value="UniProtKB"/>
</dbReference>
<dbReference type="GO" id="GO:0015827">
    <property type="term" value="P:tryptophan transport"/>
    <property type="evidence" value="ECO:0000315"/>
    <property type="project" value="UniProtKB"/>
</dbReference>
<dbReference type="GO" id="GO:0042906">
    <property type="term" value="P:xanthine transport"/>
    <property type="evidence" value="ECO:0000315"/>
    <property type="project" value="UniProtKB"/>
</dbReference>
<dbReference type="FunFam" id="3.40.50.300:FF:001225">
    <property type="entry name" value="ATP-binding cassette sub-family G member"/>
    <property type="match status" value="1"/>
</dbReference>
<dbReference type="Gene3D" id="3.40.50.300">
    <property type="entry name" value="P-loop containing nucleotide triphosphate hydrolases"/>
    <property type="match status" value="1"/>
</dbReference>
<dbReference type="InterPro" id="IPR003593">
    <property type="entry name" value="AAA+_ATPase"/>
</dbReference>
<dbReference type="InterPro" id="IPR013525">
    <property type="entry name" value="ABC2_TM"/>
</dbReference>
<dbReference type="InterPro" id="IPR003439">
    <property type="entry name" value="ABC_transporter-like_ATP-bd"/>
</dbReference>
<dbReference type="InterPro" id="IPR017871">
    <property type="entry name" value="ABC_transporter-like_CS"/>
</dbReference>
<dbReference type="InterPro" id="IPR043926">
    <property type="entry name" value="ABCG_dom"/>
</dbReference>
<dbReference type="InterPro" id="IPR050352">
    <property type="entry name" value="ABCG_transporters"/>
</dbReference>
<dbReference type="InterPro" id="IPR027417">
    <property type="entry name" value="P-loop_NTPase"/>
</dbReference>
<dbReference type="InterPro" id="IPR005284">
    <property type="entry name" value="Pigment_permease/Abcg"/>
</dbReference>
<dbReference type="NCBIfam" id="TIGR00955">
    <property type="entry name" value="3a01204"/>
    <property type="match status" value="1"/>
</dbReference>
<dbReference type="PANTHER" id="PTHR48041">
    <property type="entry name" value="ABC TRANSPORTER G FAMILY MEMBER 28"/>
    <property type="match status" value="1"/>
</dbReference>
<dbReference type="PANTHER" id="PTHR48041:SF129">
    <property type="entry name" value="PROTEIN WHITE"/>
    <property type="match status" value="1"/>
</dbReference>
<dbReference type="Pfam" id="PF01061">
    <property type="entry name" value="ABC2_membrane"/>
    <property type="match status" value="1"/>
</dbReference>
<dbReference type="Pfam" id="PF19055">
    <property type="entry name" value="ABC2_membrane_7"/>
    <property type="match status" value="1"/>
</dbReference>
<dbReference type="Pfam" id="PF00005">
    <property type="entry name" value="ABC_tran"/>
    <property type="match status" value="1"/>
</dbReference>
<dbReference type="SMART" id="SM00382">
    <property type="entry name" value="AAA"/>
    <property type="match status" value="1"/>
</dbReference>
<dbReference type="SUPFAM" id="SSF52540">
    <property type="entry name" value="P-loop containing nucleoside triphosphate hydrolases"/>
    <property type="match status" value="1"/>
</dbReference>
<dbReference type="PROSITE" id="PS00211">
    <property type="entry name" value="ABC_TRANSPORTER_1"/>
    <property type="match status" value="1"/>
</dbReference>
<dbReference type="PROSITE" id="PS50893">
    <property type="entry name" value="ABC_TRANSPORTER_2"/>
    <property type="match status" value="1"/>
</dbReference>
<feature type="chain" id="PRO_0000093382" description="Protein white">
    <location>
        <begin position="1"/>
        <end position="687"/>
    </location>
</feature>
<feature type="topological domain" description="Cytoplasmic" evidence="18">
    <location>
        <begin position="1"/>
        <end position="419"/>
    </location>
</feature>
<feature type="transmembrane region" description="Helical" evidence="1">
    <location>
        <begin position="420"/>
        <end position="440"/>
    </location>
</feature>
<feature type="topological domain" description="Extracellular" evidence="18">
    <location>
        <begin position="441"/>
        <end position="460"/>
    </location>
</feature>
<feature type="transmembrane region" description="Helical" evidence="1">
    <location>
        <begin position="461"/>
        <end position="481"/>
    </location>
</feature>
<feature type="topological domain" description="Cytoplasmic" evidence="18">
    <location>
        <begin position="482"/>
        <end position="497"/>
    </location>
</feature>
<feature type="transmembrane region" description="Helical" evidence="1">
    <location>
        <begin position="498"/>
        <end position="518"/>
    </location>
</feature>
<feature type="topological domain" description="Extracellular" evidence="18">
    <location>
        <begin position="519"/>
        <end position="531"/>
    </location>
</feature>
<feature type="transmembrane region" description="Helical" evidence="1">
    <location>
        <begin position="532"/>
        <end position="552"/>
    </location>
</feature>
<feature type="topological domain" description="Cytoplasmic" evidence="18">
    <location>
        <begin position="553"/>
        <end position="568"/>
    </location>
</feature>
<feature type="transmembrane region" description="Helical" evidence="1">
    <location>
        <begin position="569"/>
        <end position="589"/>
    </location>
</feature>
<feature type="topological domain" description="Extracellular" evidence="18">
    <location>
        <begin position="590"/>
        <end position="644"/>
    </location>
</feature>
<feature type="transmembrane region" description="Helical" evidence="1">
    <location>
        <begin position="645"/>
        <end position="665"/>
    </location>
</feature>
<feature type="topological domain" description="Cytoplasmic" evidence="18">
    <location>
        <begin position="666"/>
        <end position="675"/>
    </location>
</feature>
<feature type="domain" description="ABC transporter" evidence="2">
    <location>
        <begin position="93"/>
        <end position="341"/>
    </location>
</feature>
<feature type="region of interest" description="Disordered" evidence="4">
    <location>
        <begin position="1"/>
        <end position="30"/>
    </location>
</feature>
<feature type="binding site" evidence="2">
    <location>
        <begin position="130"/>
        <end position="137"/>
    </location>
    <ligand>
        <name>ATP</name>
        <dbReference type="ChEBI" id="CHEBI:30616"/>
    </ligand>
</feature>
<feature type="glycosylation site" description="N-linked (GlcNAc...) asparagine" evidence="3">
    <location>
        <position position="636"/>
    </location>
</feature>
<feature type="mutagenesis site" description="In cf; 70% decrease in drosopterin (eye red pigment) levels, 36% decrease in xanthommatin (eye brown pigment) levels and severe defect of copulation success; when associated with E-589." evidence="5 11">
    <original>L</original>
    <variation>R</variation>
    <location>
        <position position="49"/>
    </location>
</feature>
<feature type="mutagenesis site" description="In crr; 89% decrease in drosopterin (eye red pigment) levels and 81% decrease in xanthommatin (eye brown pigment) levels." evidence="5">
    <original>H</original>
    <variation>N</variation>
    <location>
        <position position="298"/>
    </location>
</feature>
<feature type="mutagenesis site" description="In Et87; 98% decrease in drosopterin (eye red pigment) levels and undetectable levels of xanthommatin (eye brown pigment)." evidence="5">
    <original>G</original>
    <variation>D</variation>
    <location>
        <position position="509"/>
    </location>
</feature>
<feature type="mutagenesis site" description="In Bwx; eyes are brown due to a reduction in red pigment production." evidence="16">
    <location>
        <position position="581"/>
    </location>
</feature>
<feature type="mutagenesis site" description="In co2; normal eye color. Eyes are brown due to a reduction in red pigment production in a bw/brown 6 or T50 mutant background." evidence="16">
    <original>G</original>
    <variation>S</variation>
    <location>
        <position position="588"/>
    </location>
</feature>
<feature type="mutagenesis site" description="In cf; 70% decrease in drosopterin (eye red pigment) levels, 36% decrease in xanthommatin (eye brown pigment) levels and severe defect of copulation success; when associated with R-49." evidence="5 11">
    <original>G</original>
    <variation>E</variation>
    <location>
        <position position="589"/>
    </location>
</feature>
<feature type="mutagenesis site" description="In sat; 96% decrease in drosopterin (eye red pigment) levels and 21% decrease in xanthommatin (eye brown pigment) levels." evidence="5">
    <original>F</original>
    <variation>G</variation>
    <location>
        <position position="590"/>
    </location>
</feature>
<feature type="sequence conflict" description="In Ref. 4; BAA78210." evidence="18" ref="4">
    <original>GDSGA</original>
    <variation>LIFEIPYHCRVTAD</variation>
    <location>
        <begin position="25"/>
        <end position="29"/>
    </location>
</feature>
<feature type="sequence conflict" description="In Ref. 5; AAF45826 and 7; CAB65847." evidence="18" ref="5 7">
    <original>L</original>
    <variation>R</variation>
    <location>
        <position position="49"/>
    </location>
</feature>
<feature type="sequence conflict" description="In Ref. 4; BAA78210." evidence="18" ref="4">
    <original>VGAQCPTNYNPADFYVQVLAVVPGREIESRDRIAKIC</original>
    <variation>ITLHLNSYPAWVPSVLPTTIRRTFTYRCWPLCPDGRSSPVIGSPRYG</variation>
    <location>
        <begin position="335"/>
        <end position="371"/>
    </location>
</feature>
<feature type="sequence conflict" description="In Ref. 2; CAA26716." evidence="18" ref="2">
    <original>G</original>
    <variation>A</variation>
    <location>
        <position position="616"/>
    </location>
</feature>
<proteinExistence type="evidence at protein level"/>
<reference key="1">
    <citation type="journal article" date="1990" name="Nucleic Acids Res.">
        <title>Sequence of a cDNA from the Drosophila melanogaster white gene.</title>
        <authorList>
            <person name="Pepling M."/>
            <person name="Mount S.M."/>
        </authorList>
    </citation>
    <scope>NUCLEOTIDE SEQUENCE [MRNA]</scope>
    <source>
        <tissue>Head</tissue>
    </source>
</reference>
<reference key="2">
    <citation type="journal article" date="1984" name="J. Mol. Biol.">
        <title>DNA sequence of the white locus of Drosophila melanogaster.</title>
        <authorList>
            <person name="O'Hare K."/>
            <person name="Murphy C."/>
            <person name="Levis R."/>
            <person name="Rubin G.M."/>
        </authorList>
    </citation>
    <scope>NUCLEOTIDE SEQUENCE [GENOMIC DNA]</scope>
</reference>
<reference key="3">
    <citation type="submission" date="2004-05" db="EMBL/GenBank/DDBJ databases">
        <authorList>
            <person name="O'Hare K."/>
        </authorList>
    </citation>
    <scope>SEQUENCE REVISION TO 25-29 AND 616</scope>
</reference>
<reference key="4">
    <citation type="journal article" date="2001" name="Genetics">
        <title>Dual-tagging gene trap of novel genes in Drosophila melanogaster.</title>
        <authorList>
            <person name="Lukacsovich T."/>
            <person name="Asztalos Z."/>
            <person name="Awano W."/>
            <person name="Baba K."/>
            <person name="Kondo S."/>
            <person name="Niwa S."/>
            <person name="Yamamoto D."/>
        </authorList>
    </citation>
    <scope>NUCLEOTIDE SEQUENCE [GENOMIC DNA]</scope>
</reference>
<reference key="5">
    <citation type="journal article" date="2000" name="Science">
        <title>The genome sequence of Drosophila melanogaster.</title>
        <authorList>
            <person name="Adams M.D."/>
            <person name="Celniker S.E."/>
            <person name="Holt R.A."/>
            <person name="Evans C.A."/>
            <person name="Gocayne J.D."/>
            <person name="Amanatides P.G."/>
            <person name="Scherer S.E."/>
            <person name="Li P.W."/>
            <person name="Hoskins R.A."/>
            <person name="Galle R.F."/>
            <person name="George R.A."/>
            <person name="Lewis S.E."/>
            <person name="Richards S."/>
            <person name="Ashburner M."/>
            <person name="Henderson S.N."/>
            <person name="Sutton G.G."/>
            <person name="Wortman J.R."/>
            <person name="Yandell M.D."/>
            <person name="Zhang Q."/>
            <person name="Chen L.X."/>
            <person name="Brandon R.C."/>
            <person name="Rogers Y.-H.C."/>
            <person name="Blazej R.G."/>
            <person name="Champe M."/>
            <person name="Pfeiffer B.D."/>
            <person name="Wan K.H."/>
            <person name="Doyle C."/>
            <person name="Baxter E.G."/>
            <person name="Helt G."/>
            <person name="Nelson C.R."/>
            <person name="Miklos G.L.G."/>
            <person name="Abril J.F."/>
            <person name="Agbayani A."/>
            <person name="An H.-J."/>
            <person name="Andrews-Pfannkoch C."/>
            <person name="Baldwin D."/>
            <person name="Ballew R.M."/>
            <person name="Basu A."/>
            <person name="Baxendale J."/>
            <person name="Bayraktaroglu L."/>
            <person name="Beasley E.M."/>
            <person name="Beeson K.Y."/>
            <person name="Benos P.V."/>
            <person name="Berman B.P."/>
            <person name="Bhandari D."/>
            <person name="Bolshakov S."/>
            <person name="Borkova D."/>
            <person name="Botchan M.R."/>
            <person name="Bouck J."/>
            <person name="Brokstein P."/>
            <person name="Brottier P."/>
            <person name="Burtis K.C."/>
            <person name="Busam D.A."/>
            <person name="Butler H."/>
            <person name="Cadieu E."/>
            <person name="Center A."/>
            <person name="Chandra I."/>
            <person name="Cherry J.M."/>
            <person name="Cawley S."/>
            <person name="Dahlke C."/>
            <person name="Davenport L.B."/>
            <person name="Davies P."/>
            <person name="de Pablos B."/>
            <person name="Delcher A."/>
            <person name="Deng Z."/>
            <person name="Mays A.D."/>
            <person name="Dew I."/>
            <person name="Dietz S.M."/>
            <person name="Dodson K."/>
            <person name="Doup L.E."/>
            <person name="Downes M."/>
            <person name="Dugan-Rocha S."/>
            <person name="Dunkov B.C."/>
            <person name="Dunn P."/>
            <person name="Durbin K.J."/>
            <person name="Evangelista C.C."/>
            <person name="Ferraz C."/>
            <person name="Ferriera S."/>
            <person name="Fleischmann W."/>
            <person name="Fosler C."/>
            <person name="Gabrielian A.E."/>
            <person name="Garg N.S."/>
            <person name="Gelbart W.M."/>
            <person name="Glasser K."/>
            <person name="Glodek A."/>
            <person name="Gong F."/>
            <person name="Gorrell J.H."/>
            <person name="Gu Z."/>
            <person name="Guan P."/>
            <person name="Harris M."/>
            <person name="Harris N.L."/>
            <person name="Harvey D.A."/>
            <person name="Heiman T.J."/>
            <person name="Hernandez J.R."/>
            <person name="Houck J."/>
            <person name="Hostin D."/>
            <person name="Houston K.A."/>
            <person name="Howland T.J."/>
            <person name="Wei M.-H."/>
            <person name="Ibegwam C."/>
            <person name="Jalali M."/>
            <person name="Kalush F."/>
            <person name="Karpen G.H."/>
            <person name="Ke Z."/>
            <person name="Kennison J.A."/>
            <person name="Ketchum K.A."/>
            <person name="Kimmel B.E."/>
            <person name="Kodira C.D."/>
            <person name="Kraft C.L."/>
            <person name="Kravitz S."/>
            <person name="Kulp D."/>
            <person name="Lai Z."/>
            <person name="Lasko P."/>
            <person name="Lei Y."/>
            <person name="Levitsky A.A."/>
            <person name="Li J.H."/>
            <person name="Li Z."/>
            <person name="Liang Y."/>
            <person name="Lin X."/>
            <person name="Liu X."/>
            <person name="Mattei B."/>
            <person name="McIntosh T.C."/>
            <person name="McLeod M.P."/>
            <person name="McPherson D."/>
            <person name="Merkulov G."/>
            <person name="Milshina N.V."/>
            <person name="Mobarry C."/>
            <person name="Morris J."/>
            <person name="Moshrefi A."/>
            <person name="Mount S.M."/>
            <person name="Moy M."/>
            <person name="Murphy B."/>
            <person name="Murphy L."/>
            <person name="Muzny D.M."/>
            <person name="Nelson D.L."/>
            <person name="Nelson D.R."/>
            <person name="Nelson K.A."/>
            <person name="Nixon K."/>
            <person name="Nusskern D.R."/>
            <person name="Pacleb J.M."/>
            <person name="Palazzolo M."/>
            <person name="Pittman G.S."/>
            <person name="Pan S."/>
            <person name="Pollard J."/>
            <person name="Puri V."/>
            <person name="Reese M.G."/>
            <person name="Reinert K."/>
            <person name="Remington K."/>
            <person name="Saunders R.D.C."/>
            <person name="Scheeler F."/>
            <person name="Shen H."/>
            <person name="Shue B.C."/>
            <person name="Siden-Kiamos I."/>
            <person name="Simpson M."/>
            <person name="Skupski M.P."/>
            <person name="Smith T.J."/>
            <person name="Spier E."/>
            <person name="Spradling A.C."/>
            <person name="Stapleton M."/>
            <person name="Strong R."/>
            <person name="Sun E."/>
            <person name="Svirskas R."/>
            <person name="Tector C."/>
            <person name="Turner R."/>
            <person name="Venter E."/>
            <person name="Wang A.H."/>
            <person name="Wang X."/>
            <person name="Wang Z.-Y."/>
            <person name="Wassarman D.A."/>
            <person name="Weinstock G.M."/>
            <person name="Weissenbach J."/>
            <person name="Williams S.M."/>
            <person name="Woodage T."/>
            <person name="Worley K.C."/>
            <person name="Wu D."/>
            <person name="Yang S."/>
            <person name="Yao Q.A."/>
            <person name="Ye J."/>
            <person name="Yeh R.-F."/>
            <person name="Zaveri J.S."/>
            <person name="Zhan M."/>
            <person name="Zhang G."/>
            <person name="Zhao Q."/>
            <person name="Zheng L."/>
            <person name="Zheng X.H."/>
            <person name="Zhong F.N."/>
            <person name="Zhong W."/>
            <person name="Zhou X."/>
            <person name="Zhu S.C."/>
            <person name="Zhu X."/>
            <person name="Smith H.O."/>
            <person name="Gibbs R.A."/>
            <person name="Myers E.W."/>
            <person name="Rubin G.M."/>
            <person name="Venter J.C."/>
        </authorList>
    </citation>
    <scope>NUCLEOTIDE SEQUENCE [LARGE SCALE GENOMIC DNA]</scope>
    <source>
        <strain>Berkeley</strain>
    </source>
</reference>
<reference key="6">
    <citation type="journal article" date="2002" name="Genome Biol.">
        <title>Annotation of the Drosophila melanogaster euchromatic genome: a systematic review.</title>
        <authorList>
            <person name="Misra S."/>
            <person name="Crosby M.A."/>
            <person name="Mungall C.J."/>
            <person name="Matthews B.B."/>
            <person name="Campbell K.S."/>
            <person name="Hradecky P."/>
            <person name="Huang Y."/>
            <person name="Kaminker J.S."/>
            <person name="Millburn G.H."/>
            <person name="Prochnik S.E."/>
            <person name="Smith C.D."/>
            <person name="Tupy J.L."/>
            <person name="Whitfield E.J."/>
            <person name="Bayraktaroglu L."/>
            <person name="Berman B.P."/>
            <person name="Bettencourt B.R."/>
            <person name="Celniker S.E."/>
            <person name="de Grey A.D.N.J."/>
            <person name="Drysdale R.A."/>
            <person name="Harris N.L."/>
            <person name="Richter J."/>
            <person name="Russo S."/>
            <person name="Schroeder A.J."/>
            <person name="Shu S.Q."/>
            <person name="Stapleton M."/>
            <person name="Yamada C."/>
            <person name="Ashburner M."/>
            <person name="Gelbart W.M."/>
            <person name="Rubin G.M."/>
            <person name="Lewis S.E."/>
        </authorList>
    </citation>
    <scope>GENOME REANNOTATION</scope>
    <source>
        <strain>Berkeley</strain>
    </source>
</reference>
<reference key="7">
    <citation type="journal article" date="2000" name="Science">
        <title>From sequence to chromosome: the tip of the X chromosome of D. melanogaster.</title>
        <authorList>
            <person name="Benos P.V."/>
            <person name="Gatt M.K."/>
            <person name="Ashburner M."/>
            <person name="Murphy L."/>
            <person name="Harris D."/>
            <person name="Barrell B.G."/>
            <person name="Ferraz C."/>
            <person name="Vidal S."/>
            <person name="Brun C."/>
            <person name="Demailles J."/>
            <person name="Cadieu E."/>
            <person name="Dreano S."/>
            <person name="Gloux S."/>
            <person name="Lelaure V."/>
            <person name="Mottier S."/>
            <person name="Galibert F."/>
            <person name="Borkova D."/>
            <person name="Minana B."/>
            <person name="Kafatos F.C."/>
            <person name="Louis C."/>
            <person name="Siden-Kiamos I."/>
            <person name="Bolshakov S."/>
            <person name="Papagiannakis G."/>
            <person name="Spanos L."/>
            <person name="Cox S."/>
            <person name="Madueno E."/>
            <person name="de Pablos B."/>
            <person name="Modolell J."/>
            <person name="Peter A."/>
            <person name="Schoettler P."/>
            <person name="Werner M."/>
            <person name="Mourkioti F."/>
            <person name="Beinert N."/>
            <person name="Dowe G."/>
            <person name="Schaefer U."/>
            <person name="Jaeckle H."/>
            <person name="Bucheton A."/>
            <person name="Callister D.M."/>
            <person name="Campbell L.A."/>
            <person name="Darlamitsou A."/>
            <person name="Henderson N.S."/>
            <person name="McMillan P.J."/>
            <person name="Salles C."/>
            <person name="Tait E.A."/>
            <person name="Valenti P."/>
            <person name="Saunders R.D.C."/>
            <person name="Glover D.M."/>
        </authorList>
    </citation>
    <scope>NUCLEOTIDE SEQUENCE [LARGE SCALE GENOMIC DNA]</scope>
    <source>
        <strain>Oregon-R</strain>
    </source>
</reference>
<reference key="8">
    <citation type="journal article" date="1989" name="Genetics">
        <title>Cloning and characterization of the scarlet gene of Drosophila melanogaster.</title>
        <authorList>
            <person name="Tearle R.G."/>
            <person name="Belote J.M."/>
            <person name="McKeown M."/>
            <person name="Baker B.S."/>
            <person name="Howells A.J."/>
        </authorList>
    </citation>
    <scope>NUCLEOTIDE SEQUENCE [GENOMIC DNA] OF 224-331</scope>
</reference>
<reference key="9">
    <citation type="journal article" date="1975" name="Biochem. Genet.">
        <title>Transport defects as the physiological basis for eye color mutants of Drosophila melanogaster.</title>
        <authorList>
            <person name="Sullivan D.T."/>
            <person name="Sullivan M.C."/>
        </authorList>
    </citation>
    <scope>FUNCTION</scope>
    <scope>CATALYTIC ACTIVITY</scope>
    <scope>DISRUPTION PHENOTYPE</scope>
</reference>
<reference key="10">
    <citation type="journal article" date="1979" name="Biochem. Genet.">
        <title>Purine transport by malpighian tubules of pteridine-deficient eye color mutants of Drosophila melanogaster.</title>
        <authorList>
            <person name="Sullivan D.T."/>
            <person name="Bell L.A."/>
            <person name="Paton D.R."/>
            <person name="Sullivan M.C."/>
        </authorList>
    </citation>
    <scope>FUNCTION</scope>
    <scope>CATALYTIC ACTIVITY</scope>
    <scope>DISRUPTION PHENOTYPE</scope>
</reference>
<reference key="11">
    <citation type="journal article" date="1980" name="Biochem. Genet.">
        <title>Genetic and functional analysis of tryptophan transport in Malpighian tubules of Drosophila.</title>
        <authorList>
            <person name="Sullivan D.T."/>
            <person name="Bell L.A."/>
            <person name="Paton D.R."/>
            <person name="Sullivan M.C."/>
        </authorList>
    </citation>
    <scope>FUNCTION</scope>
    <scope>CATALYTIC ACTIVITY</scope>
    <scope>DISRUPTION PHENOTYPE</scope>
</reference>
<reference key="12">
    <citation type="journal article" date="1994" name="J. Biol. Chem.">
        <title>Mutational analysis of the traffic ATPase (ABC) transporters involved in uptake of eye pigment precursors in Drosophila melanogaster. Implications for structure-function relationships.</title>
        <authorList>
            <person name="Ewart G.D."/>
            <person name="Cannell D."/>
            <person name="Cox G.B."/>
            <person name="Howells A.J."/>
        </authorList>
    </citation>
    <scope>FUNCTION</scope>
    <scope>SUBUNIT</scope>
    <scope>MUTAGENESIS OF ILE-581 AND GLY-588</scope>
</reference>
<reference key="13">
    <citation type="journal article" date="1999" name="Biochim. Biophys. Acta">
        <title>Mutations in the white gene of Drosophila melanogaster affecting ABC transporters that determine eye colouration.</title>
        <authorList>
            <person name="Mackenzie S.M."/>
            <person name="Brooker M.R."/>
            <person name="Gill T.R."/>
            <person name="Cox G.B."/>
            <person name="Howells A.J."/>
            <person name="Ewart G.D."/>
        </authorList>
    </citation>
    <scope>FUNCTION</scope>
    <scope>MUTAGENESIS OF LEU-49; HIS-298; GLY-509; GLY-589 AND PHE-590</scope>
</reference>
<reference key="14">
    <citation type="journal article" date="2000" name="Genetica">
        <title>Sub-cellular localisation of the white/scarlet ABC transporter to pigment granule membranes within the compound eye of Drosophila melanogaster.</title>
        <authorList>
            <person name="Mackenzie S.M."/>
            <person name="Howells A.J."/>
            <person name="Cox G.B."/>
            <person name="Ewart G.D."/>
        </authorList>
    </citation>
    <scope>SUBUNIT</scope>
    <scope>SUBCELLULAR LOCATION</scope>
    <scope>TISSUE SPECIFICITY</scope>
    <scope>DISRUPTION PHENOTYPE</scope>
</reference>
<reference key="15">
    <citation type="journal article" date="2008" name="J. Exp. Biol.">
        <title>A new role for a classical gene: white transports cyclic GMP.</title>
        <authorList>
            <person name="Evans J.M."/>
            <person name="Day J.P."/>
            <person name="Cabrero P."/>
            <person name="Dow J.A."/>
            <person name="Davies S.A."/>
        </authorList>
    </citation>
    <scope>FUNCTION</scope>
    <scope>CATALYTIC ACTIVITY</scope>
    <scope>DISRUPTION PHENOTYPE</scope>
</reference>
<reference key="16">
    <citation type="journal article" date="2008" name="J. Exp. Biol.">
        <title>Drosophila ABC transporter mutants white, brown and scarlet have altered contents and distribution of biogenic amines in the brain.</title>
        <authorList>
            <person name="Borycz J."/>
            <person name="Borycz J.A."/>
            <person name="Kubow A."/>
            <person name="Lloyd V."/>
            <person name="Meinertzhagen I.A."/>
        </authorList>
    </citation>
    <scope>FUNCTION</scope>
    <scope>SUBUNIT</scope>
    <scope>TISSUE SPECIFICITY</scope>
    <scope>DISRUPTION PHENOTYPE</scope>
</reference>
<reference key="17">
    <citation type="journal article" date="2016" name="Genetics">
        <title>Timing of Locomotor Recovery from Anoxia Modulated by the white Gene in Drosophila.</title>
        <authorList>
            <person name="Xiao C."/>
            <person name="Robertson R.M."/>
        </authorList>
    </citation>
    <scope>DISRUPTION PHENOTYPE</scope>
</reference>
<reference key="18">
    <citation type="journal article" date="2017" name="Sci. Rep.">
        <title>The white gene controls copulation success in Drosophila melanogaster.</title>
        <authorList>
            <person name="Xiao C."/>
            <person name="Qiu S."/>
            <person name="Robertson R.M."/>
        </authorList>
    </citation>
    <scope>DISRUPTION PHENOTYPE</scope>
    <scope>MUTAGENESIS OF LEU-49 AND GLY-589</scope>
</reference>
<reference key="19">
    <citation type="journal article" date="2018" name="J. Exp. Biol.">
        <title>Biogenesis of zinc storage granules in Drosophila melanogaster.</title>
        <authorList>
            <person name="Tejeda-Guzman C."/>
            <person name="Rosas-Arellano A."/>
            <person name="Kroll T."/>
            <person name="Webb S.M."/>
            <person name="Barajas-Aceves M."/>
            <person name="Osorio B."/>
            <person name="Missirlis F."/>
        </authorList>
    </citation>
    <scope>FUNCTION</scope>
    <scope>DISRUPTION PHENOTYPE</scope>
</reference>
<reference key="20">
    <citation type="journal article" date="2021" name="Nat. Metab.">
        <title>white regulates proliferative homeostasis of intestinal stem cells during ageing in Drosophila.</title>
        <authorList>
            <person name="Sasaki A."/>
            <person name="Nishimura T."/>
            <person name="Takano T."/>
            <person name="Naito S."/>
            <person name="Yoo S.K."/>
        </authorList>
    </citation>
    <scope>FUNCTION</scope>
    <scope>CATALYTIC ACTIVITY</scope>
    <scope>SUBCELLULAR LOCATION</scope>
    <scope>TISSUE SPECIFICITY</scope>
    <scope>INDUCTION</scope>
    <scope>DISRUPTION PHENOTYPE</scope>
</reference>
<keyword id="KW-0067">ATP-binding</keyword>
<keyword id="KW-0968">Cytoplasmic vesicle</keyword>
<keyword id="KW-0325">Glycoprotein</keyword>
<keyword id="KW-0472">Membrane</keyword>
<keyword id="KW-0547">Nucleotide-binding</keyword>
<keyword id="KW-0608">Pigment</keyword>
<keyword id="KW-1185">Reference proteome</keyword>
<keyword id="KW-1278">Translocase</keyword>
<keyword id="KW-0812">Transmembrane</keyword>
<keyword id="KW-1133">Transmembrane helix</keyword>
<keyword id="KW-0813">Transport</keyword>